<comment type="subcellular location">
    <subcellularLocation>
        <location evidence="2">Membrane</location>
        <topology evidence="2">Single-pass membrane protein</topology>
    </subcellularLocation>
</comment>
<comment type="similarity">
    <text evidence="2">Belongs to the SRP1/TIP1 family. Seripauperin subfamily.</text>
</comment>
<dbReference type="EMBL" id="U22383">
    <property type="protein sequence ID" value="AAB64724.1"/>
    <property type="molecule type" value="Genomic_DNA"/>
</dbReference>
<dbReference type="EMBL" id="BK006945">
    <property type="protein sequence ID" value="DAA09760.1"/>
    <property type="molecule type" value="Genomic_DNA"/>
</dbReference>
<dbReference type="PIR" id="S59419">
    <property type="entry name" value="S59419"/>
</dbReference>
<dbReference type="RefSeq" id="NP_013566.1">
    <property type="nucleotide sequence ID" value="NM_001182349.1"/>
</dbReference>
<dbReference type="BioGRID" id="31719">
    <property type="interactions" value="52"/>
</dbReference>
<dbReference type="DIP" id="DIP-4671N"/>
<dbReference type="FunCoup" id="P53427">
    <property type="interactions" value="67"/>
</dbReference>
<dbReference type="STRING" id="4932.YLR461W"/>
<dbReference type="PaxDb" id="4932-YLR461W"/>
<dbReference type="EnsemblFungi" id="YLR461W_mRNA">
    <property type="protein sequence ID" value="YLR461W"/>
    <property type="gene ID" value="YLR461W"/>
</dbReference>
<dbReference type="GeneID" id="851183"/>
<dbReference type="KEGG" id="sce:YLR461W"/>
<dbReference type="AGR" id="SGD:S000004453"/>
<dbReference type="SGD" id="S000004453">
    <property type="gene designation" value="PAU4"/>
</dbReference>
<dbReference type="VEuPathDB" id="FungiDB:YLR461W"/>
<dbReference type="eggNOG" id="ENOG502SR1B">
    <property type="taxonomic scope" value="Eukaryota"/>
</dbReference>
<dbReference type="GeneTree" id="ENSGT00940000176276"/>
<dbReference type="HOGENOM" id="CLU_136376_0_0_1"/>
<dbReference type="InParanoid" id="P53427"/>
<dbReference type="OrthoDB" id="4059055at2759"/>
<dbReference type="BioCyc" id="YEAST:G3O-32513-MONOMER"/>
<dbReference type="PRO" id="PR:P53427"/>
<dbReference type="Proteomes" id="UP000002311">
    <property type="component" value="Chromosome XII"/>
</dbReference>
<dbReference type="RNAct" id="P53427">
    <property type="molecule type" value="protein"/>
</dbReference>
<dbReference type="GO" id="GO:0009277">
    <property type="term" value="C:fungal-type cell wall"/>
    <property type="evidence" value="ECO:0000318"/>
    <property type="project" value="GO_Central"/>
</dbReference>
<dbReference type="GO" id="GO:0000324">
    <property type="term" value="C:fungal-type vacuole"/>
    <property type="evidence" value="ECO:0007005"/>
    <property type="project" value="SGD"/>
</dbReference>
<dbReference type="GO" id="GO:0016020">
    <property type="term" value="C:membrane"/>
    <property type="evidence" value="ECO:0007669"/>
    <property type="project" value="UniProtKB-SubCell"/>
</dbReference>
<dbReference type="GO" id="GO:0005199">
    <property type="term" value="F:structural constituent of cell wall"/>
    <property type="evidence" value="ECO:0000318"/>
    <property type="project" value="GO_Central"/>
</dbReference>
<dbReference type="GO" id="GO:0031505">
    <property type="term" value="P:fungal-type cell wall organization"/>
    <property type="evidence" value="ECO:0000318"/>
    <property type="project" value="GO_Central"/>
</dbReference>
<dbReference type="InterPro" id="IPR000992">
    <property type="entry name" value="SRP1_TIP1"/>
</dbReference>
<dbReference type="InterPro" id="IPR050788">
    <property type="entry name" value="Yeast_SRP1/TIP1_CWP"/>
</dbReference>
<dbReference type="PANTHER" id="PTHR31002:SF34">
    <property type="entry name" value="CELL WALL PROTEIN CWP1-RELATED"/>
    <property type="match status" value="1"/>
</dbReference>
<dbReference type="PANTHER" id="PTHR31002">
    <property type="entry name" value="SERIPAUPERIN"/>
    <property type="match status" value="1"/>
</dbReference>
<dbReference type="Pfam" id="PF00660">
    <property type="entry name" value="SRP1_TIP1"/>
    <property type="match status" value="1"/>
</dbReference>
<dbReference type="PROSITE" id="PS00724">
    <property type="entry name" value="SRP1_TIP1"/>
    <property type="match status" value="1"/>
</dbReference>
<gene>
    <name type="primary">PAU4</name>
    <name type="ordered locus">YLR461W</name>
    <name type="ORF">L9122.1</name>
</gene>
<proteinExistence type="inferred from homology"/>
<organism>
    <name type="scientific">Saccharomyces cerevisiae (strain ATCC 204508 / S288c)</name>
    <name type="common">Baker's yeast</name>
    <dbReference type="NCBI Taxonomy" id="559292"/>
    <lineage>
        <taxon>Eukaryota</taxon>
        <taxon>Fungi</taxon>
        <taxon>Dikarya</taxon>
        <taxon>Ascomycota</taxon>
        <taxon>Saccharomycotina</taxon>
        <taxon>Saccharomycetes</taxon>
        <taxon>Saccharomycetales</taxon>
        <taxon>Saccharomycetaceae</taxon>
        <taxon>Saccharomyces</taxon>
    </lineage>
</organism>
<reference key="1">
    <citation type="journal article" date="1997" name="Nature">
        <title>The nucleotide sequence of Saccharomyces cerevisiae chromosome XII.</title>
        <authorList>
            <person name="Johnston M."/>
            <person name="Hillier L.W."/>
            <person name="Riles L."/>
            <person name="Albermann K."/>
            <person name="Andre B."/>
            <person name="Ansorge W."/>
            <person name="Benes V."/>
            <person name="Brueckner M."/>
            <person name="Delius H."/>
            <person name="Dubois E."/>
            <person name="Duesterhoeft A."/>
            <person name="Entian K.-D."/>
            <person name="Floeth M."/>
            <person name="Goffeau A."/>
            <person name="Hebling U."/>
            <person name="Heumann K."/>
            <person name="Heuss-Neitzel D."/>
            <person name="Hilbert H."/>
            <person name="Hilger F."/>
            <person name="Kleine K."/>
            <person name="Koetter P."/>
            <person name="Louis E.J."/>
            <person name="Messenguy F."/>
            <person name="Mewes H.-W."/>
            <person name="Miosga T."/>
            <person name="Moestl D."/>
            <person name="Mueller-Auer S."/>
            <person name="Nentwich U."/>
            <person name="Obermaier B."/>
            <person name="Piravandi E."/>
            <person name="Pohl T.M."/>
            <person name="Portetelle D."/>
            <person name="Purnelle B."/>
            <person name="Rechmann S."/>
            <person name="Rieger M."/>
            <person name="Rinke M."/>
            <person name="Rose M."/>
            <person name="Scharfe M."/>
            <person name="Scherens B."/>
            <person name="Scholler P."/>
            <person name="Schwager C."/>
            <person name="Schwarz S."/>
            <person name="Underwood A.P."/>
            <person name="Urrestarazu L.A."/>
            <person name="Vandenbol M."/>
            <person name="Verhasselt P."/>
            <person name="Vierendeels F."/>
            <person name="Voet M."/>
            <person name="Volckaert G."/>
            <person name="Voss H."/>
            <person name="Wambutt R."/>
            <person name="Wedler E."/>
            <person name="Wedler H."/>
            <person name="Zimmermann F.K."/>
            <person name="Zollner A."/>
            <person name="Hani J."/>
            <person name="Hoheisel J.D."/>
        </authorList>
    </citation>
    <scope>NUCLEOTIDE SEQUENCE [LARGE SCALE GENOMIC DNA]</scope>
    <source>
        <strain>ATCC 204508 / S288c</strain>
    </source>
</reference>
<reference key="2">
    <citation type="journal article" date="2014" name="G3 (Bethesda)">
        <title>The reference genome sequence of Saccharomyces cerevisiae: Then and now.</title>
        <authorList>
            <person name="Engel S.R."/>
            <person name="Dietrich F.S."/>
            <person name="Fisk D.G."/>
            <person name="Binkley G."/>
            <person name="Balakrishnan R."/>
            <person name="Costanzo M.C."/>
            <person name="Dwight S.S."/>
            <person name="Hitz B.C."/>
            <person name="Karra K."/>
            <person name="Nash R.S."/>
            <person name="Weng S."/>
            <person name="Wong E.D."/>
            <person name="Lloyd P."/>
            <person name="Skrzypek M.S."/>
            <person name="Miyasato S.R."/>
            <person name="Simison M."/>
            <person name="Cherry J.M."/>
        </authorList>
    </citation>
    <scope>GENOME REANNOTATION</scope>
    <source>
        <strain>ATCC 204508 / S288c</strain>
    </source>
</reference>
<protein>
    <recommendedName>
        <fullName>Seripauperin-4</fullName>
    </recommendedName>
</protein>
<accession>P53427</accession>
<accession>D6VZ94</accession>
<keyword id="KW-0472">Membrane</keyword>
<keyword id="KW-1185">Reference proteome</keyword>
<keyword id="KW-0812">Transmembrane</keyword>
<keyword id="KW-1133">Transmembrane helix</keyword>
<sequence length="120" mass="12891">MVKLTSIAAGVAAIAATASATTTIAQSDERVNLVELGVYVSDIRAHLAQYYMFQAAHPTETYPVEVAEAVFNYGDFTTMLTGIAPDQVTRMITGVPWYSSRLKPAISKALSKDGIYTIAN</sequence>
<name>PAU4_YEAST</name>
<evidence type="ECO:0000255" key="1"/>
<evidence type="ECO:0000305" key="2"/>
<feature type="chain" id="PRO_0000203781" description="Seripauperin-4">
    <location>
        <begin position="1"/>
        <end position="120"/>
    </location>
</feature>
<feature type="transmembrane region" description="Helical" evidence="1">
    <location>
        <begin position="7"/>
        <end position="24"/>
    </location>
</feature>